<evidence type="ECO:0000250" key="1"/>
<evidence type="ECO:0000255" key="2">
    <source>
        <dbReference type="PROSITE-ProRule" id="PRU00664"/>
    </source>
</evidence>
<protein>
    <recommendedName>
        <fullName>ELMO domain-containing protein 1</fullName>
    </recommendedName>
</protein>
<accession>Q5NVD7</accession>
<proteinExistence type="evidence at transcript level"/>
<sequence>MKHFLRMLIQVCLYFYCKFLWRCLKFVMRKLTGRCELQRICYNTKPGASRTMKIETSLRDSKSKLLQTSVSVHPDAIEKTIEDIMELKKINPDVNPQLGISLQACLLQIVGYRNLIADVEKLRREPYDSDNPQHEEMLLKLWKFLKPNTPLESRISKQWCEIGFQGDDPKTDFRGMGLLGLYNLQYFAERDATAAQQVLSDSLHPKCSKFSKAEWEKKRMDKAIGYSFAIVGINITDLAYNLLVSGALKTHFYNIAPEAPTLSHFQQTFCYLMHEFHKFWIEEDPMDIMEFNRVREKFRKRIIKQLQNPDMALCPHFAASEGLINM</sequence>
<name>ELMD1_PONAB</name>
<organism>
    <name type="scientific">Pongo abelii</name>
    <name type="common">Sumatran orangutan</name>
    <name type="synonym">Pongo pygmaeus abelii</name>
    <dbReference type="NCBI Taxonomy" id="9601"/>
    <lineage>
        <taxon>Eukaryota</taxon>
        <taxon>Metazoa</taxon>
        <taxon>Chordata</taxon>
        <taxon>Craniata</taxon>
        <taxon>Vertebrata</taxon>
        <taxon>Euteleostomi</taxon>
        <taxon>Mammalia</taxon>
        <taxon>Eutheria</taxon>
        <taxon>Euarchontoglires</taxon>
        <taxon>Primates</taxon>
        <taxon>Haplorrhini</taxon>
        <taxon>Catarrhini</taxon>
        <taxon>Hominidae</taxon>
        <taxon>Pongo</taxon>
    </lineage>
</organism>
<comment type="function">
    <text evidence="1">Acts as a GTPase-activating protein (GAP) toward guanine nucleotide exchange factors like ARL2, ARL3, ARF1 and ARF6, but not for GTPases outside the Arf family.</text>
</comment>
<dbReference type="EMBL" id="CR926100">
    <property type="protein sequence ID" value="CAI29726.1"/>
    <property type="molecule type" value="mRNA"/>
</dbReference>
<dbReference type="RefSeq" id="NP_001127118.1">
    <property type="nucleotide sequence ID" value="NM_001133646.1"/>
</dbReference>
<dbReference type="SMR" id="Q5NVD7"/>
<dbReference type="STRING" id="9601.ENSPPYP00000004390"/>
<dbReference type="Ensembl" id="ENSPPYT00000047874.1">
    <property type="protein sequence ID" value="ENSPPYP00000027932.1"/>
    <property type="gene ID" value="ENSPPYG00000003835.3"/>
</dbReference>
<dbReference type="GeneID" id="100174164"/>
<dbReference type="KEGG" id="pon:100174164"/>
<dbReference type="CTD" id="55531"/>
<dbReference type="eggNOG" id="KOG2998">
    <property type="taxonomic scope" value="Eukaryota"/>
</dbReference>
<dbReference type="GeneTree" id="ENSGT00940000159782"/>
<dbReference type="InParanoid" id="Q5NVD7"/>
<dbReference type="OrthoDB" id="67155at2759"/>
<dbReference type="Proteomes" id="UP000001595">
    <property type="component" value="Chromosome 11"/>
</dbReference>
<dbReference type="GO" id="GO:0005096">
    <property type="term" value="F:GTPase activator activity"/>
    <property type="evidence" value="ECO:0000250"/>
    <property type="project" value="UniProtKB"/>
</dbReference>
<dbReference type="InterPro" id="IPR006816">
    <property type="entry name" value="ELMO_dom"/>
</dbReference>
<dbReference type="InterPro" id="IPR050868">
    <property type="entry name" value="ELMO_domain-containing"/>
</dbReference>
<dbReference type="PANTHER" id="PTHR12771:SF18">
    <property type="entry name" value="ELMO DOMAIN-CONTAINING PROTEIN 1"/>
    <property type="match status" value="1"/>
</dbReference>
<dbReference type="PANTHER" id="PTHR12771">
    <property type="entry name" value="ENGULFMENT AND CELL MOTILITY"/>
    <property type="match status" value="1"/>
</dbReference>
<dbReference type="Pfam" id="PF04727">
    <property type="entry name" value="ELMO_CED12"/>
    <property type="match status" value="1"/>
</dbReference>
<dbReference type="PROSITE" id="PS51335">
    <property type="entry name" value="ELMO"/>
    <property type="match status" value="1"/>
</dbReference>
<reference key="1">
    <citation type="submission" date="2004-11" db="EMBL/GenBank/DDBJ databases">
        <authorList>
            <consortium name="The German cDNA consortium"/>
        </authorList>
    </citation>
    <scope>NUCLEOTIDE SEQUENCE [LARGE SCALE MRNA]</scope>
    <source>
        <tissue>Brain cortex</tissue>
    </source>
</reference>
<feature type="chain" id="PRO_0000225016" description="ELMO domain-containing protein 1">
    <location>
        <begin position="1"/>
        <end position="326"/>
    </location>
</feature>
<feature type="domain" description="ELMO" evidence="2">
    <location>
        <begin position="133"/>
        <end position="306"/>
    </location>
</feature>
<gene>
    <name type="primary">ELMOD1</name>
</gene>
<keyword id="KW-0343">GTPase activation</keyword>
<keyword id="KW-1185">Reference proteome</keyword>